<feature type="chain" id="PRO_0000052832" description="Hemoglobin subunit alpha-D">
    <location>
        <begin position="1"/>
        <end position="141"/>
    </location>
</feature>
<feature type="domain" description="Globin" evidence="1">
    <location>
        <begin position="1"/>
        <end position="141"/>
    </location>
</feature>
<feature type="binding site" description="distal binding residue">
    <location>
        <position position="57"/>
    </location>
    <ligand>
        <name>heme b</name>
        <dbReference type="ChEBI" id="CHEBI:60344"/>
    </ligand>
    <ligandPart>
        <name>Fe</name>
        <dbReference type="ChEBI" id="CHEBI:18248"/>
    </ligandPart>
</feature>
<feature type="binding site" description="proximal binding residue">
    <location>
        <position position="87"/>
    </location>
    <ligand>
        <name>heme b</name>
        <dbReference type="ChEBI" id="CHEBI:60344"/>
    </ligand>
    <ligandPart>
        <name>Fe</name>
        <dbReference type="ChEBI" id="CHEBI:18248"/>
    </ligandPart>
</feature>
<sequence length="141" mass="15775">VLTAEDRRLLQASVGKLGCRLEDIGADALNRLLITFPQSKTYFSHFNLSPGSKDIIHQGEKVGKALDSALKHLDDIRGTLSQLSDLHAYNLRVDPVNFQLLSKCIHVSLATHLRNEYSASVTLAWDKFLELVADVLSEKYR</sequence>
<name>HBAD_ERYML</name>
<proteinExistence type="evidence at protein level"/>
<comment type="function">
    <text>Involved in oxygen transport from the lung to the various peripheral tissues.</text>
</comment>
<comment type="subunit">
    <text>The deoxy-Hb is a heterotetramer of two alpha and two beta chains, but oxygenation results in dissociation to dimers.</text>
</comment>
<comment type="tissue specificity">
    <text>Red blood cells.</text>
</comment>
<comment type="similarity">
    <text evidence="1">Belongs to the globin family.</text>
</comment>
<keyword id="KW-0903">Direct protein sequencing</keyword>
<keyword id="KW-0349">Heme</keyword>
<keyword id="KW-0408">Iron</keyword>
<keyword id="KW-0479">Metal-binding</keyword>
<keyword id="KW-0561">Oxygen transport</keyword>
<keyword id="KW-0813">Transport</keyword>
<dbReference type="PIR" id="A32854">
    <property type="entry name" value="A32854"/>
</dbReference>
<dbReference type="SMR" id="P16417"/>
<dbReference type="GO" id="GO:0072562">
    <property type="term" value="C:blood microparticle"/>
    <property type="evidence" value="ECO:0007669"/>
    <property type="project" value="TreeGrafter"/>
</dbReference>
<dbReference type="GO" id="GO:0031838">
    <property type="term" value="C:haptoglobin-hemoglobin complex"/>
    <property type="evidence" value="ECO:0007669"/>
    <property type="project" value="TreeGrafter"/>
</dbReference>
<dbReference type="GO" id="GO:0005833">
    <property type="term" value="C:hemoglobin complex"/>
    <property type="evidence" value="ECO:0007669"/>
    <property type="project" value="InterPro"/>
</dbReference>
<dbReference type="GO" id="GO:0031720">
    <property type="term" value="F:haptoglobin binding"/>
    <property type="evidence" value="ECO:0007669"/>
    <property type="project" value="TreeGrafter"/>
</dbReference>
<dbReference type="GO" id="GO:0020037">
    <property type="term" value="F:heme binding"/>
    <property type="evidence" value="ECO:0007669"/>
    <property type="project" value="InterPro"/>
</dbReference>
<dbReference type="GO" id="GO:0046872">
    <property type="term" value="F:metal ion binding"/>
    <property type="evidence" value="ECO:0007669"/>
    <property type="project" value="UniProtKB-KW"/>
</dbReference>
<dbReference type="GO" id="GO:0043177">
    <property type="term" value="F:organic acid binding"/>
    <property type="evidence" value="ECO:0007669"/>
    <property type="project" value="TreeGrafter"/>
</dbReference>
<dbReference type="GO" id="GO:0019825">
    <property type="term" value="F:oxygen binding"/>
    <property type="evidence" value="ECO:0007669"/>
    <property type="project" value="InterPro"/>
</dbReference>
<dbReference type="GO" id="GO:0005344">
    <property type="term" value="F:oxygen carrier activity"/>
    <property type="evidence" value="ECO:0007669"/>
    <property type="project" value="UniProtKB-KW"/>
</dbReference>
<dbReference type="GO" id="GO:0004601">
    <property type="term" value="F:peroxidase activity"/>
    <property type="evidence" value="ECO:0007669"/>
    <property type="project" value="TreeGrafter"/>
</dbReference>
<dbReference type="GO" id="GO:0042744">
    <property type="term" value="P:hydrogen peroxide catabolic process"/>
    <property type="evidence" value="ECO:0007669"/>
    <property type="project" value="TreeGrafter"/>
</dbReference>
<dbReference type="CDD" id="cd08927">
    <property type="entry name" value="Hb-alpha-like"/>
    <property type="match status" value="1"/>
</dbReference>
<dbReference type="FunFam" id="1.10.490.10:FF:000002">
    <property type="entry name" value="Hemoglobin subunit alpha"/>
    <property type="match status" value="1"/>
</dbReference>
<dbReference type="Gene3D" id="1.10.490.10">
    <property type="entry name" value="Globins"/>
    <property type="match status" value="1"/>
</dbReference>
<dbReference type="InterPro" id="IPR000971">
    <property type="entry name" value="Globin"/>
</dbReference>
<dbReference type="InterPro" id="IPR009050">
    <property type="entry name" value="Globin-like_sf"/>
</dbReference>
<dbReference type="InterPro" id="IPR012292">
    <property type="entry name" value="Globin/Proto"/>
</dbReference>
<dbReference type="InterPro" id="IPR002338">
    <property type="entry name" value="Hemoglobin_a-typ"/>
</dbReference>
<dbReference type="InterPro" id="IPR050056">
    <property type="entry name" value="Hemoglobin_oxygen_transport"/>
</dbReference>
<dbReference type="PANTHER" id="PTHR11442">
    <property type="entry name" value="HEMOGLOBIN FAMILY MEMBER"/>
    <property type="match status" value="1"/>
</dbReference>
<dbReference type="PANTHER" id="PTHR11442:SF48">
    <property type="entry name" value="HEMOGLOBIN SUBUNIT ALPHA"/>
    <property type="match status" value="1"/>
</dbReference>
<dbReference type="Pfam" id="PF00042">
    <property type="entry name" value="Globin"/>
    <property type="match status" value="1"/>
</dbReference>
<dbReference type="PRINTS" id="PR00612">
    <property type="entry name" value="ALPHAHAEM"/>
</dbReference>
<dbReference type="SUPFAM" id="SSF46458">
    <property type="entry name" value="Globin-like"/>
    <property type="match status" value="1"/>
</dbReference>
<dbReference type="PROSITE" id="PS01033">
    <property type="entry name" value="GLOBIN"/>
    <property type="match status" value="1"/>
</dbReference>
<evidence type="ECO:0000255" key="1">
    <source>
        <dbReference type="PROSITE-ProRule" id="PRU00238"/>
    </source>
</evidence>
<organism>
    <name type="scientific">Erythrolamprus miliaris</name>
    <name type="common">South American water snake</name>
    <name type="synonym">Liophis miliaris</name>
    <dbReference type="NCBI Taxonomy" id="8582"/>
    <lineage>
        <taxon>Eukaryota</taxon>
        <taxon>Metazoa</taxon>
        <taxon>Chordata</taxon>
        <taxon>Craniata</taxon>
        <taxon>Vertebrata</taxon>
        <taxon>Euteleostomi</taxon>
        <taxon>Lepidosauria</taxon>
        <taxon>Squamata</taxon>
        <taxon>Bifurcata</taxon>
        <taxon>Unidentata</taxon>
        <taxon>Episquamata</taxon>
        <taxon>Toxicofera</taxon>
        <taxon>Serpentes</taxon>
        <taxon>Colubroidea</taxon>
        <taxon>Dipsadidae</taxon>
        <taxon>Erythrolamprus</taxon>
    </lineage>
</organism>
<gene>
    <name type="primary">HBAD</name>
</gene>
<reference key="1">
    <citation type="journal article" date="1989" name="J. Biol. Chem.">
        <title>The amino acid sequences of the alpha and beta chains of hemoglobin from the snake, Liophis miliaris.</title>
        <authorList>
            <person name="Matsuura M.S.A."/>
            <person name="Fushitani K."/>
            <person name="Riggs A."/>
        </authorList>
    </citation>
    <scope>PROTEIN SEQUENCE</scope>
</reference>
<accession>P16417</accession>
<protein>
    <recommendedName>
        <fullName>Hemoglobin subunit alpha-D</fullName>
    </recommendedName>
    <alternativeName>
        <fullName>Alpha-D-globin</fullName>
    </alternativeName>
    <alternativeName>
        <fullName>Hemoglobin alpha-D chain</fullName>
    </alternativeName>
</protein>